<protein>
    <recommendedName>
        <fullName evidence="4">Neurotrophic factor BDNF precursor form</fullName>
        <shortName>proBDNF</shortName>
    </recommendedName>
    <alternativeName>
        <fullName>Brain-derived neurotrophic factor</fullName>
    </alternativeName>
    <component>
        <recommendedName>
            <fullName>Neurotrophic factor BDNF</fullName>
        </recommendedName>
    </component>
</protein>
<dbReference type="EMBL" id="U56638">
    <property type="protein sequence ID" value="AAD10844.1"/>
    <property type="molecule type" value="Genomic_DNA"/>
</dbReference>
<dbReference type="BMRB" id="Q6LCI5"/>
<dbReference type="SMR" id="Q6LCI5"/>
<dbReference type="FunCoup" id="Q6LCI5">
    <property type="interactions" value="65"/>
</dbReference>
<dbReference type="STRING" id="9646.ENSAMEP00000015321"/>
<dbReference type="GlyCosmos" id="Q6LCI5">
    <property type="glycosylation" value="1 site, No reported glycans"/>
</dbReference>
<dbReference type="eggNOG" id="ENOG502QRU8">
    <property type="taxonomic scope" value="Eukaryota"/>
</dbReference>
<dbReference type="HOGENOM" id="CLU_059942_0_0_1"/>
<dbReference type="InParanoid" id="Q6LCI5"/>
<dbReference type="Proteomes" id="UP000008912">
    <property type="component" value="Unassembled WGS sequence"/>
</dbReference>
<dbReference type="GO" id="GO:0030424">
    <property type="term" value="C:axon"/>
    <property type="evidence" value="ECO:0007669"/>
    <property type="project" value="TreeGrafter"/>
</dbReference>
<dbReference type="GO" id="GO:0030425">
    <property type="term" value="C:dendrite"/>
    <property type="evidence" value="ECO:0007669"/>
    <property type="project" value="TreeGrafter"/>
</dbReference>
<dbReference type="GO" id="GO:0005615">
    <property type="term" value="C:extracellular space"/>
    <property type="evidence" value="ECO:0007669"/>
    <property type="project" value="TreeGrafter"/>
</dbReference>
<dbReference type="GO" id="GO:0008021">
    <property type="term" value="C:synaptic vesicle"/>
    <property type="evidence" value="ECO:0007669"/>
    <property type="project" value="TreeGrafter"/>
</dbReference>
<dbReference type="GO" id="GO:0008083">
    <property type="term" value="F:growth factor activity"/>
    <property type="evidence" value="ECO:0007669"/>
    <property type="project" value="UniProtKB-KW"/>
</dbReference>
<dbReference type="GO" id="GO:0005163">
    <property type="term" value="F:nerve growth factor receptor binding"/>
    <property type="evidence" value="ECO:0007669"/>
    <property type="project" value="TreeGrafter"/>
</dbReference>
<dbReference type="GO" id="GO:0007169">
    <property type="term" value="P:cell surface receptor protein tyrosine kinase signaling pathway"/>
    <property type="evidence" value="ECO:0007669"/>
    <property type="project" value="TreeGrafter"/>
</dbReference>
<dbReference type="GO" id="GO:0050804">
    <property type="term" value="P:modulation of chemical synaptic transmission"/>
    <property type="evidence" value="ECO:0007669"/>
    <property type="project" value="TreeGrafter"/>
</dbReference>
<dbReference type="GO" id="GO:0043524">
    <property type="term" value="P:negative regulation of neuron apoptotic process"/>
    <property type="evidence" value="ECO:0007669"/>
    <property type="project" value="TreeGrafter"/>
</dbReference>
<dbReference type="GO" id="GO:0021675">
    <property type="term" value="P:nerve development"/>
    <property type="evidence" value="ECO:0007669"/>
    <property type="project" value="TreeGrafter"/>
</dbReference>
<dbReference type="GO" id="GO:0038180">
    <property type="term" value="P:nerve growth factor signaling pathway"/>
    <property type="evidence" value="ECO:0007669"/>
    <property type="project" value="TreeGrafter"/>
</dbReference>
<dbReference type="GO" id="GO:0048812">
    <property type="term" value="P:neuron projection morphogenesis"/>
    <property type="evidence" value="ECO:0007669"/>
    <property type="project" value="TreeGrafter"/>
</dbReference>
<dbReference type="FunFam" id="2.10.90.10:FF:000002">
    <property type="entry name" value="Brain-derived neurotrophic factor"/>
    <property type="match status" value="1"/>
</dbReference>
<dbReference type="Gene3D" id="2.10.90.10">
    <property type="entry name" value="Cystine-knot cytokines"/>
    <property type="match status" value="1"/>
</dbReference>
<dbReference type="InterPro" id="IPR020430">
    <property type="entry name" value="Brain-der_neurotrophic_factor"/>
</dbReference>
<dbReference type="InterPro" id="IPR029034">
    <property type="entry name" value="Cystine-knot_cytokine"/>
</dbReference>
<dbReference type="InterPro" id="IPR020408">
    <property type="entry name" value="Nerve_growth_factor-like"/>
</dbReference>
<dbReference type="InterPro" id="IPR002072">
    <property type="entry name" value="Nerve_growth_factor-rel"/>
</dbReference>
<dbReference type="InterPro" id="IPR019846">
    <property type="entry name" value="Nerve_growth_factor_CS"/>
</dbReference>
<dbReference type="PANTHER" id="PTHR11589:SF3">
    <property type="entry name" value="BRAIN-DERIVED NEUROTROPHIC FACTOR"/>
    <property type="match status" value="1"/>
</dbReference>
<dbReference type="PANTHER" id="PTHR11589">
    <property type="entry name" value="NERVE GROWTH FACTOR NGF -RELATED"/>
    <property type="match status" value="1"/>
</dbReference>
<dbReference type="Pfam" id="PF00243">
    <property type="entry name" value="NGF"/>
    <property type="match status" value="1"/>
</dbReference>
<dbReference type="PIRSF" id="PIRSF001789">
    <property type="entry name" value="NGF"/>
    <property type="match status" value="1"/>
</dbReference>
<dbReference type="PRINTS" id="PR01912">
    <property type="entry name" value="BDNFACTOR"/>
</dbReference>
<dbReference type="PRINTS" id="PR00268">
    <property type="entry name" value="NGF"/>
</dbReference>
<dbReference type="SMART" id="SM00140">
    <property type="entry name" value="NGF"/>
    <property type="match status" value="1"/>
</dbReference>
<dbReference type="SUPFAM" id="SSF57501">
    <property type="entry name" value="Cystine-knot cytokines"/>
    <property type="match status" value="1"/>
</dbReference>
<dbReference type="PROSITE" id="PS00248">
    <property type="entry name" value="NGF_1"/>
    <property type="match status" value="1"/>
</dbReference>
<dbReference type="PROSITE" id="PS50270">
    <property type="entry name" value="NGF_2"/>
    <property type="match status" value="1"/>
</dbReference>
<keyword id="KW-0165">Cleavage on pair of basic residues</keyword>
<keyword id="KW-1015">Disulfide bond</keyword>
<keyword id="KW-0325">Glycoprotein</keyword>
<keyword id="KW-0339">Growth factor</keyword>
<keyword id="KW-1185">Reference proteome</keyword>
<keyword id="KW-0964">Secreted</keyword>
<keyword id="KW-0732">Signal</keyword>
<evidence type="ECO:0000250" key="1">
    <source>
        <dbReference type="UniProtKB" id="P21237"/>
    </source>
</evidence>
<evidence type="ECO:0000250" key="2">
    <source>
        <dbReference type="UniProtKB" id="P23560"/>
    </source>
</evidence>
<evidence type="ECO:0000255" key="3"/>
<evidence type="ECO:0000305" key="4"/>
<organism>
    <name type="scientific">Ailuropoda melanoleuca</name>
    <name type="common">Giant panda</name>
    <dbReference type="NCBI Taxonomy" id="9646"/>
    <lineage>
        <taxon>Eukaryota</taxon>
        <taxon>Metazoa</taxon>
        <taxon>Chordata</taxon>
        <taxon>Craniata</taxon>
        <taxon>Vertebrata</taxon>
        <taxon>Euteleostomi</taxon>
        <taxon>Mammalia</taxon>
        <taxon>Eutheria</taxon>
        <taxon>Laurasiatheria</taxon>
        <taxon>Carnivora</taxon>
        <taxon>Caniformia</taxon>
        <taxon>Ursidae</taxon>
        <taxon>Ailuropoda</taxon>
    </lineage>
</organism>
<comment type="function">
    <text evidence="1 2">Important signaling molecule that activates signaling cascades downstream of NTRK2 (By similarity). During development, promotes the survival and differentiation of selected neuronal populations of the peripheral and central nervous systems. Participates in axonal growth, pathfinding and in the modulation of dendritic growth and morphology. Major regulator of synaptic transmission and plasticity at adult synapses in many regions of the CNS. The versatility of BDNF is emphasized by its contribution to a range of adaptive neuronal responses including long-term potentiation (LTP), long-term depression (LTD), certain forms of short-term synaptic plasticity, as well as homeostatic regulation of intrinsic neuronal excitability (By similarity).</text>
</comment>
<comment type="function">
    <molecule>Neurotrophic factor BDNF precursor form</molecule>
    <text evidence="1">Important signaling molecule that activates signaling cascades downstream of NTRK2. Activates signaling cascades via the heterodimeric receptor formed by NGFR and SORCS2. Signaling via NGFR and SORCS2 plays a role in synaptic plasticity and long-term depression (LTD). Binding to NGFR and SORCS2 promotes neuronal apoptosis. Promotes neuronal growth cone collapse.</text>
</comment>
<comment type="subunit">
    <text evidence="1 2">Monomers and homodimers (By similarity). Binds to NTRK2/TRKB. Can form heterodimers with other neurotrophin family members, such as NTF3 and NTF4 (in vitro), but the physiological relevance of this is not clear (By similarity). BDNF precursor form: interacts with the heterodimer formed by NGFR and SORCS2. Mature BDNF has much lower affinity for the heterodimer formed by NGFR and SORCS2 (By similarity).</text>
</comment>
<comment type="subcellular location">
    <subcellularLocation>
        <location evidence="2">Secreted</location>
    </subcellularLocation>
</comment>
<comment type="subcellular location">
    <molecule>Neurotrophic factor BDNF precursor form</molecule>
    <subcellularLocation>
        <location evidence="2">Secreted</location>
    </subcellularLocation>
    <text evidence="2">A proportion of BDNF is secreted as immature precursor (proBDNF).</text>
</comment>
<comment type="PTM">
    <molecule>Neurotrophic factor BDNF precursor form</molecule>
    <text evidence="2">N-glycosylated and glycosulfated, contrary to mature BDNF.</text>
</comment>
<comment type="PTM">
    <text evidence="2">Mature BDNF is produced by proteolytic removal of the propeptide, catalyzed by a FURIN family member. In addition, the precursor form is proteolytically cleaved within the propeptide, but this is not an obligatory intermediate for the production of mature BDNF. Can be converted into mature BDNF by plasmin (PLG).</text>
</comment>
<comment type="similarity">
    <text evidence="4">Belongs to the NGF-beta family.</text>
</comment>
<name>BDNF_AILME</name>
<feature type="signal peptide" evidence="3">
    <location>
        <begin position="1"/>
        <end position="18"/>
    </location>
</feature>
<feature type="chain" id="PRO_0000447527" description="Neurotrophic factor BDNF precursor form">
    <location>
        <begin position="19"/>
        <end position="247"/>
    </location>
</feature>
<feature type="propeptide" id="PRO_0000019623" evidence="1">
    <location>
        <begin position="19"/>
        <end position="128"/>
    </location>
</feature>
<feature type="chain" id="PRO_0000019624" description="Neurotrophic factor BDNF">
    <location>
        <begin position="129"/>
        <end position="247"/>
    </location>
</feature>
<feature type="site" description="Cleavage; by MBTPS1" evidence="2">
    <location>
        <begin position="57"/>
        <end position="58"/>
    </location>
</feature>
<feature type="glycosylation site" description="N-linked (GlcNAc...) asparagine" evidence="3">
    <location>
        <position position="121"/>
    </location>
</feature>
<feature type="disulfide bond" evidence="2">
    <location>
        <begin position="141"/>
        <end position="208"/>
    </location>
</feature>
<feature type="disulfide bond" evidence="2">
    <location>
        <begin position="186"/>
        <end position="237"/>
    </location>
</feature>
<feature type="disulfide bond" evidence="2">
    <location>
        <begin position="196"/>
        <end position="239"/>
    </location>
</feature>
<proteinExistence type="inferred from homology"/>
<gene>
    <name type="primary">BDNF</name>
</gene>
<accession>Q6LCI5</accession>
<reference key="1">
    <citation type="submission" date="1996-04" db="EMBL/GenBank/DDBJ databases">
        <title>Giant panda (GP) and lesser panda (LP) BDNF gene sequences and their deduced amino acid sequences.</title>
        <authorList>
            <person name="Feng L."/>
        </authorList>
    </citation>
    <scope>NUCLEOTIDE SEQUENCE [GENOMIC DNA]</scope>
</reference>
<sequence length="247" mass="27834">MTILFLTMVISYFGCMKAAPMKEANVRGQGSLAYPGVRTHGTLESVNGPKAGSRGLTSLADTFEHVIEELLDEDQKVRPNEENNKDADLYTSRVMLSSQVPLEPPLLFLLEEYKNYLDAANMSMRVRRHSDPARRGELSVCDSISEWVTAADKKTAVDMSGGTVTVLEKVPVSKGQLKQYFYETKCNPMGYTKEGCRGIDKRHWNSQCRTTQSYVRALTMDSKKRIGWRFIRIDTSCVCTLTIKRGR</sequence>